<name>SDHD_SHIF8</name>
<keyword id="KW-0456">Lyase</keyword>
<keyword id="KW-0663">Pyridoxal phosphate</keyword>
<proteinExistence type="inferred from homology"/>
<dbReference type="EC" id="4.3.1.18" evidence="1"/>
<dbReference type="EMBL" id="CP000266">
    <property type="protein sequence ID" value="ABF04534.1"/>
    <property type="molecule type" value="Genomic_DNA"/>
</dbReference>
<dbReference type="RefSeq" id="WP_000426458.1">
    <property type="nucleotide sequence ID" value="NC_008258.1"/>
</dbReference>
<dbReference type="SMR" id="Q0T2D1"/>
<dbReference type="KEGG" id="sfv:SFV_2425"/>
<dbReference type="HOGENOM" id="CLU_035707_0_0_6"/>
<dbReference type="Proteomes" id="UP000000659">
    <property type="component" value="Chromosome"/>
</dbReference>
<dbReference type="GO" id="GO:0008721">
    <property type="term" value="F:D-serine ammonia-lyase activity"/>
    <property type="evidence" value="ECO:0007669"/>
    <property type="project" value="UniProtKB-EC"/>
</dbReference>
<dbReference type="GO" id="GO:0016836">
    <property type="term" value="F:hydro-lyase activity"/>
    <property type="evidence" value="ECO:0007669"/>
    <property type="project" value="UniProtKB-UniRule"/>
</dbReference>
<dbReference type="GO" id="GO:0030170">
    <property type="term" value="F:pyridoxal phosphate binding"/>
    <property type="evidence" value="ECO:0007669"/>
    <property type="project" value="InterPro"/>
</dbReference>
<dbReference type="GO" id="GO:0036088">
    <property type="term" value="P:D-serine catabolic process"/>
    <property type="evidence" value="ECO:0007669"/>
    <property type="project" value="TreeGrafter"/>
</dbReference>
<dbReference type="GO" id="GO:0009097">
    <property type="term" value="P:isoleucine biosynthetic process"/>
    <property type="evidence" value="ECO:0007669"/>
    <property type="project" value="TreeGrafter"/>
</dbReference>
<dbReference type="CDD" id="cd06447">
    <property type="entry name" value="D-Ser-dehyd"/>
    <property type="match status" value="1"/>
</dbReference>
<dbReference type="FunFam" id="3.40.50.1100:FF:000018">
    <property type="entry name" value="D-serine dehydratase"/>
    <property type="match status" value="1"/>
</dbReference>
<dbReference type="Gene3D" id="3.40.50.1100">
    <property type="match status" value="2"/>
</dbReference>
<dbReference type="HAMAP" id="MF_01030">
    <property type="entry name" value="D_Ser_dehydrat"/>
    <property type="match status" value="1"/>
</dbReference>
<dbReference type="InterPro" id="IPR011780">
    <property type="entry name" value="D_Ser_am_lyase"/>
</dbReference>
<dbReference type="InterPro" id="IPR050147">
    <property type="entry name" value="Ser/Thr_Dehydratase"/>
</dbReference>
<dbReference type="InterPro" id="IPR000634">
    <property type="entry name" value="Ser/Thr_deHydtase_PyrdxlP-BS"/>
</dbReference>
<dbReference type="InterPro" id="IPR001926">
    <property type="entry name" value="TrpB-like_PALP"/>
</dbReference>
<dbReference type="InterPro" id="IPR036052">
    <property type="entry name" value="TrpB-like_PALP_sf"/>
</dbReference>
<dbReference type="NCBIfam" id="TIGR02035">
    <property type="entry name" value="D_Ser_am_lyase"/>
    <property type="match status" value="1"/>
</dbReference>
<dbReference type="NCBIfam" id="NF002823">
    <property type="entry name" value="PRK02991.1"/>
    <property type="match status" value="1"/>
</dbReference>
<dbReference type="PANTHER" id="PTHR48078:SF9">
    <property type="entry name" value="D-SERINE DEHYDRATASE"/>
    <property type="match status" value="1"/>
</dbReference>
<dbReference type="PANTHER" id="PTHR48078">
    <property type="entry name" value="THREONINE DEHYDRATASE, MITOCHONDRIAL-RELATED"/>
    <property type="match status" value="1"/>
</dbReference>
<dbReference type="Pfam" id="PF00291">
    <property type="entry name" value="PALP"/>
    <property type="match status" value="1"/>
</dbReference>
<dbReference type="SUPFAM" id="SSF53686">
    <property type="entry name" value="Tryptophan synthase beta subunit-like PLP-dependent enzymes"/>
    <property type="match status" value="1"/>
</dbReference>
<dbReference type="PROSITE" id="PS00165">
    <property type="entry name" value="DEHYDRATASE_SER_THR"/>
    <property type="match status" value="1"/>
</dbReference>
<feature type="chain" id="PRO_0000291743" description="D-serine dehydratase">
    <location>
        <begin position="1"/>
        <end position="442"/>
    </location>
</feature>
<feature type="modified residue" description="N6-(pyridoxal phosphate)lysine" evidence="1">
    <location>
        <position position="118"/>
    </location>
</feature>
<reference key="1">
    <citation type="journal article" date="2006" name="BMC Genomics">
        <title>Complete genome sequence of Shigella flexneri 5b and comparison with Shigella flexneri 2a.</title>
        <authorList>
            <person name="Nie H."/>
            <person name="Yang F."/>
            <person name="Zhang X."/>
            <person name="Yang J."/>
            <person name="Chen L."/>
            <person name="Wang J."/>
            <person name="Xiong Z."/>
            <person name="Peng J."/>
            <person name="Sun L."/>
            <person name="Dong J."/>
            <person name="Xue Y."/>
            <person name="Xu X."/>
            <person name="Chen S."/>
            <person name="Yao Z."/>
            <person name="Shen Y."/>
            <person name="Jin Q."/>
        </authorList>
    </citation>
    <scope>NUCLEOTIDE SEQUENCE [LARGE SCALE GENOMIC DNA]</scope>
    <source>
        <strain>8401</strain>
    </source>
</reference>
<protein>
    <recommendedName>
        <fullName evidence="1">D-serine dehydratase</fullName>
        <ecNumber evidence="1">4.3.1.18</ecNumber>
    </recommendedName>
    <alternativeName>
        <fullName evidence="1">D-serine deaminase</fullName>
        <shortName evidence="1">DSD</shortName>
    </alternativeName>
</protein>
<sequence length="442" mass="47875">MENAKMNSLIAQYPLVKDLVALKETTWFNPSTTSLAEGLPYVGLTEQDVQDAHARLSRFAPYLAKAFAETAATGGIIESELVAIPAMQKRLEKEYQQPISGQLLLKKDSHLPISGSIKARGGIYEVLAHAEKLALEAGLLTLDDDYSKLLSPEFKQFFSQYSIAVGSTGNLGLSIGIMSARIGFKVTVHMSADARAWKKAKLRSHGVTVVEYEQDYGVAVEEGRKAAQSDPNCFFIDDENSRTLFLGYSVAGQRLKAQFAQQGRIVDADNPLFVYLPCGVGGGPGGVAFGLKLAFGDHVHCFFAEPTHSPCMLLGVHTGLHDQISVQDIGIDNLTAADGLAVGRASGFVGRAMERLLDGFYTLSDQTMYDMLGWLAQEEGIRLEPSALAGMAGPQRVCASVSYQQMHGFSAEQLRNATHLVWATGGGMVPEEEMNQYLAKGR</sequence>
<evidence type="ECO:0000255" key="1">
    <source>
        <dbReference type="HAMAP-Rule" id="MF_01030"/>
    </source>
</evidence>
<comment type="catalytic activity">
    <reaction evidence="1">
        <text>D-serine = pyruvate + NH4(+)</text>
        <dbReference type="Rhea" id="RHEA:13977"/>
        <dbReference type="ChEBI" id="CHEBI:15361"/>
        <dbReference type="ChEBI" id="CHEBI:28938"/>
        <dbReference type="ChEBI" id="CHEBI:35247"/>
        <dbReference type="EC" id="4.3.1.18"/>
    </reaction>
</comment>
<comment type="cofactor">
    <cofactor evidence="1">
        <name>pyridoxal 5'-phosphate</name>
        <dbReference type="ChEBI" id="CHEBI:597326"/>
    </cofactor>
</comment>
<comment type="subunit">
    <text evidence="1">Monomer.</text>
</comment>
<comment type="similarity">
    <text evidence="1">Belongs to the serine/threonine dehydratase family. DsdA subfamily.</text>
</comment>
<organism>
    <name type="scientific">Shigella flexneri serotype 5b (strain 8401)</name>
    <dbReference type="NCBI Taxonomy" id="373384"/>
    <lineage>
        <taxon>Bacteria</taxon>
        <taxon>Pseudomonadati</taxon>
        <taxon>Pseudomonadota</taxon>
        <taxon>Gammaproteobacteria</taxon>
        <taxon>Enterobacterales</taxon>
        <taxon>Enterobacteriaceae</taxon>
        <taxon>Shigella</taxon>
    </lineage>
</organism>
<gene>
    <name evidence="1" type="primary">dsdA</name>
    <name type="ordered locus">SFV_2425</name>
</gene>
<accession>Q0T2D1</accession>